<accession>P46652</accession>
<evidence type="ECO:0000250" key="1"/>
<evidence type="ECO:0000250" key="2">
    <source>
        <dbReference type="UniProtKB" id="P07750"/>
    </source>
</evidence>
<evidence type="ECO:0000255" key="3"/>
<evidence type="ECO:0000305" key="4"/>
<keyword id="KW-0075">B-cell activation</keyword>
<keyword id="KW-0202">Cytokine</keyword>
<keyword id="KW-1015">Disulfide bond</keyword>
<keyword id="KW-0325">Glycoprotein</keyword>
<keyword id="KW-0339">Growth factor</keyword>
<keyword id="KW-1185">Reference proteome</keyword>
<keyword id="KW-0964">Secreted</keyword>
<keyword id="KW-0732">Signal</keyword>
<comment type="function">
    <text evidence="2">Participates in at least several B-cell activation processes as well as of other cell types. It is a costimulator of DNA-synthesis. It induces the expression of class II MHC molecules on resting B-cells. It enhances both secretion and cell surface expression of IgE and IgG1. It also regulates the expression of the low affinity Fc receptor for IgE (CD23) on both lymphocytes and monocytes. Positively regulates IL31RA expression in macrophages. Stimulates autophagy in dendritic cells by interfering with mTORC1 signaling and through the induction of RUFY4.</text>
</comment>
<comment type="subcellular location">
    <subcellularLocation>
        <location>Secreted</location>
    </subcellularLocation>
</comment>
<comment type="similarity">
    <text evidence="4">Belongs to the IL-4/IL-13 family.</text>
</comment>
<dbReference type="EMBL" id="U19838">
    <property type="protein sequence ID" value="AAB60396.1"/>
    <property type="molecule type" value="mRNA"/>
</dbReference>
<dbReference type="SMR" id="P46652"/>
<dbReference type="STRING" id="9531.ENSCATP00000040696"/>
<dbReference type="GlyCosmos" id="P46652">
    <property type="glycosylation" value="1 site, No reported glycans"/>
</dbReference>
<dbReference type="Proteomes" id="UP000233060">
    <property type="component" value="Unassembled WGS sequence"/>
</dbReference>
<dbReference type="GO" id="GO:0005615">
    <property type="term" value="C:extracellular space"/>
    <property type="evidence" value="ECO:0007669"/>
    <property type="project" value="UniProtKB-KW"/>
</dbReference>
<dbReference type="GO" id="GO:0005125">
    <property type="term" value="F:cytokine activity"/>
    <property type="evidence" value="ECO:0007669"/>
    <property type="project" value="UniProtKB-KW"/>
</dbReference>
<dbReference type="GO" id="GO:0008083">
    <property type="term" value="F:growth factor activity"/>
    <property type="evidence" value="ECO:0007669"/>
    <property type="project" value="UniProtKB-KW"/>
</dbReference>
<dbReference type="GO" id="GO:0005136">
    <property type="term" value="F:interleukin-4 receptor binding"/>
    <property type="evidence" value="ECO:0007669"/>
    <property type="project" value="InterPro"/>
</dbReference>
<dbReference type="GO" id="GO:0042113">
    <property type="term" value="P:B cell activation"/>
    <property type="evidence" value="ECO:0007669"/>
    <property type="project" value="UniProtKB-KW"/>
</dbReference>
<dbReference type="GO" id="GO:0006955">
    <property type="term" value="P:immune response"/>
    <property type="evidence" value="ECO:0007669"/>
    <property type="project" value="InterPro"/>
</dbReference>
<dbReference type="GO" id="GO:0035771">
    <property type="term" value="P:interleukin-4-mediated signaling pathway"/>
    <property type="evidence" value="ECO:0007669"/>
    <property type="project" value="TreeGrafter"/>
</dbReference>
<dbReference type="GO" id="GO:0050728">
    <property type="term" value="P:negative regulation of inflammatory response"/>
    <property type="evidence" value="ECO:0007669"/>
    <property type="project" value="TreeGrafter"/>
</dbReference>
<dbReference type="GO" id="GO:0045893">
    <property type="term" value="P:positive regulation of DNA-templated transcription"/>
    <property type="evidence" value="ECO:0007669"/>
    <property type="project" value="TreeGrafter"/>
</dbReference>
<dbReference type="GO" id="GO:0016239">
    <property type="term" value="P:positive regulation of macroautophagy"/>
    <property type="evidence" value="ECO:0000250"/>
    <property type="project" value="UniProtKB"/>
</dbReference>
<dbReference type="GO" id="GO:0050776">
    <property type="term" value="P:regulation of immune response"/>
    <property type="evidence" value="ECO:0007669"/>
    <property type="project" value="TreeGrafter"/>
</dbReference>
<dbReference type="FunFam" id="1.20.1250.10:FF:000014">
    <property type="entry name" value="Interleukin-4"/>
    <property type="match status" value="1"/>
</dbReference>
<dbReference type="Gene3D" id="1.20.1250.10">
    <property type="match status" value="1"/>
</dbReference>
<dbReference type="InterPro" id="IPR009079">
    <property type="entry name" value="4_helix_cytokine-like_core"/>
</dbReference>
<dbReference type="InterPro" id="IPR002354">
    <property type="entry name" value="IL-4"/>
</dbReference>
<dbReference type="InterPro" id="IPR001325">
    <property type="entry name" value="IL-4/IL-13"/>
</dbReference>
<dbReference type="InterPro" id="IPR018096">
    <property type="entry name" value="IL-4/IL-13_CS"/>
</dbReference>
<dbReference type="PANTHER" id="PTHR47401">
    <property type="entry name" value="INTERLEUKIN-4"/>
    <property type="match status" value="1"/>
</dbReference>
<dbReference type="PANTHER" id="PTHR47401:SF1">
    <property type="entry name" value="INTERLEUKIN-4"/>
    <property type="match status" value="1"/>
</dbReference>
<dbReference type="Pfam" id="PF00727">
    <property type="entry name" value="IL4"/>
    <property type="match status" value="1"/>
</dbReference>
<dbReference type="PIRSF" id="PIRSF001941">
    <property type="entry name" value="Interleukin_4"/>
    <property type="match status" value="1"/>
</dbReference>
<dbReference type="PRINTS" id="PR00431">
    <property type="entry name" value="INTERLEUKIN4"/>
</dbReference>
<dbReference type="SMART" id="SM00190">
    <property type="entry name" value="IL4_13"/>
    <property type="match status" value="1"/>
</dbReference>
<dbReference type="SUPFAM" id="SSF47266">
    <property type="entry name" value="4-helical cytokines"/>
    <property type="match status" value="1"/>
</dbReference>
<dbReference type="PROSITE" id="PS00838">
    <property type="entry name" value="INTERLEUKIN_4_13"/>
    <property type="match status" value="1"/>
</dbReference>
<name>IL4_CERAT</name>
<feature type="signal peptide" evidence="1">
    <location>
        <begin position="1"/>
        <end position="24"/>
    </location>
</feature>
<feature type="chain" id="PRO_0000015529" description="Interleukin-4">
    <location>
        <begin position="25"/>
        <end position="153"/>
    </location>
</feature>
<feature type="glycosylation site" description="N-linked (GlcNAc...) asparagine" evidence="3">
    <location>
        <position position="62"/>
    </location>
</feature>
<feature type="disulfide bond" evidence="3">
    <location>
        <begin position="27"/>
        <end position="151"/>
    </location>
</feature>
<feature type="disulfide bond" evidence="3">
    <location>
        <begin position="48"/>
        <end position="89"/>
    </location>
</feature>
<feature type="disulfide bond" evidence="3">
    <location>
        <begin position="70"/>
        <end position="123"/>
    </location>
</feature>
<feature type="sequence variant">
    <original>C</original>
    <variation>F</variation>
    <location>
        <position position="17"/>
    </location>
</feature>
<feature type="sequence variant">
    <original>N</original>
    <variation>S</variation>
    <location>
        <position position="26"/>
    </location>
</feature>
<feature type="sequence variant">
    <original>S</original>
    <variation>T</variation>
    <location>
        <position position="93"/>
    </location>
</feature>
<feature type="sequence variant">
    <original>K</original>
    <variation>M</variation>
    <location>
        <position position="141"/>
    </location>
</feature>
<feature type="sequence variant">
    <original>Y</original>
    <variation>F</variation>
    <location>
        <position position="148"/>
    </location>
</feature>
<reference key="1">
    <citation type="journal article" date="1995" name="J. Immunol.">
        <title>Comparative sequence analysis of cytokine genes from human and nonhuman primates.</title>
        <authorList>
            <person name="Villinger F.J."/>
            <person name="Brar S.S."/>
            <person name="Mayne A.E."/>
            <person name="Chikkala N."/>
            <person name="Ansari A.A."/>
        </authorList>
    </citation>
    <scope>NUCLEOTIDE SEQUENCE [MRNA]</scope>
    <source>
        <tissue>Blood</tissue>
    </source>
</reference>
<gene>
    <name type="primary">IL4</name>
</gene>
<sequence length="153" mass="17410">MGLTSQLLPPLFFLLACAGNFAHGHNCHIALREIIETLNSLTEQKTLCTKLTITDILAASKNTTEKETFCRAATVLRQFYSHHEKDTRCLGASAQQFHRHKQLIRFLKRLDRNLWGLAGLNSCPVKEASQSTLEDFLERLKTIMREKYSKCSS</sequence>
<proteinExistence type="evidence at transcript level"/>
<organism>
    <name type="scientific">Cercocebus atys</name>
    <name type="common">Sooty mangabey</name>
    <name type="synonym">Cercocebus torquatus atys</name>
    <dbReference type="NCBI Taxonomy" id="9531"/>
    <lineage>
        <taxon>Eukaryota</taxon>
        <taxon>Metazoa</taxon>
        <taxon>Chordata</taxon>
        <taxon>Craniata</taxon>
        <taxon>Vertebrata</taxon>
        <taxon>Euteleostomi</taxon>
        <taxon>Mammalia</taxon>
        <taxon>Eutheria</taxon>
        <taxon>Euarchontoglires</taxon>
        <taxon>Primates</taxon>
        <taxon>Haplorrhini</taxon>
        <taxon>Catarrhini</taxon>
        <taxon>Cercopithecidae</taxon>
        <taxon>Cercopithecinae</taxon>
        <taxon>Cercocebus</taxon>
    </lineage>
</organism>
<protein>
    <recommendedName>
        <fullName>Interleukin-4</fullName>
        <shortName>IL-4</shortName>
    </recommendedName>
    <alternativeName>
        <fullName>B-cell stimulatory factor 1</fullName>
        <shortName>BSF-1</shortName>
    </alternativeName>
    <alternativeName>
        <fullName>Lymphocyte stimulatory factor 1</fullName>
    </alternativeName>
</protein>